<proteinExistence type="evidence at protein level"/>
<dbReference type="EMBL" id="AJ865015">
    <property type="protein sequence ID" value="CAI23765.1"/>
    <property type="molecule type" value="mRNA"/>
</dbReference>
<dbReference type="SMR" id="P84177"/>
<dbReference type="Allergome" id="1173">
    <property type="allergen name" value="Cit s 2"/>
</dbReference>
<dbReference type="Allergome" id="3200">
    <property type="allergen name" value="Cit s 2.0101"/>
</dbReference>
<dbReference type="GO" id="GO:0005737">
    <property type="term" value="C:cytoplasm"/>
    <property type="evidence" value="ECO:0007669"/>
    <property type="project" value="UniProtKB-KW"/>
</dbReference>
<dbReference type="GO" id="GO:0005856">
    <property type="term" value="C:cytoskeleton"/>
    <property type="evidence" value="ECO:0007669"/>
    <property type="project" value="UniProtKB-SubCell"/>
</dbReference>
<dbReference type="GO" id="GO:0003779">
    <property type="term" value="F:actin binding"/>
    <property type="evidence" value="ECO:0007669"/>
    <property type="project" value="UniProtKB-KW"/>
</dbReference>
<dbReference type="CDD" id="cd00148">
    <property type="entry name" value="PROF"/>
    <property type="match status" value="1"/>
</dbReference>
<dbReference type="FunFam" id="3.30.450.30:FF:000001">
    <property type="entry name" value="Profilin"/>
    <property type="match status" value="1"/>
</dbReference>
<dbReference type="Gene3D" id="3.30.450.30">
    <property type="entry name" value="Dynein light chain 2a, cytoplasmic"/>
    <property type="match status" value="1"/>
</dbReference>
<dbReference type="InterPro" id="IPR048278">
    <property type="entry name" value="PFN"/>
</dbReference>
<dbReference type="InterPro" id="IPR005455">
    <property type="entry name" value="PFN_euk"/>
</dbReference>
<dbReference type="InterPro" id="IPR036140">
    <property type="entry name" value="PFN_sf"/>
</dbReference>
<dbReference type="InterPro" id="IPR027310">
    <property type="entry name" value="Profilin_CS"/>
</dbReference>
<dbReference type="PANTHER" id="PTHR11604">
    <property type="entry name" value="PROFILIN"/>
    <property type="match status" value="1"/>
</dbReference>
<dbReference type="PANTHER" id="PTHR11604:SF59">
    <property type="entry name" value="PROFILIN"/>
    <property type="match status" value="1"/>
</dbReference>
<dbReference type="Pfam" id="PF00235">
    <property type="entry name" value="Profilin"/>
    <property type="match status" value="1"/>
</dbReference>
<dbReference type="PRINTS" id="PR00392">
    <property type="entry name" value="PROFILIN"/>
</dbReference>
<dbReference type="PRINTS" id="PR01640">
    <property type="entry name" value="PROFILINPLNT"/>
</dbReference>
<dbReference type="SMART" id="SM00392">
    <property type="entry name" value="PROF"/>
    <property type="match status" value="1"/>
</dbReference>
<dbReference type="SUPFAM" id="SSF55770">
    <property type="entry name" value="Profilin (actin-binding protein)"/>
    <property type="match status" value="1"/>
</dbReference>
<dbReference type="PROSITE" id="PS00414">
    <property type="entry name" value="PROFILIN"/>
    <property type="match status" value="1"/>
</dbReference>
<sequence>MSWQAYVDDHLMCDIDGNRLTAAAILGQDGSVWSQSATFPAFRLEEIAAILKDFDQPGTLAPTGLFLGGTKYMVIQGEAGAVIRGKKGSGGIIVKKTNQALIIGIYDEPLTPGQCNMIVERLGDYLIEQGL</sequence>
<name>PROF1_CITSI</name>
<feature type="initiator methionine" description="Removed" evidence="2">
    <location>
        <position position="1"/>
    </location>
</feature>
<feature type="chain" id="PRO_0000199626" description="Profilin" evidence="2">
    <location>
        <begin position="2"/>
        <end position="131"/>
    </location>
</feature>
<feature type="sequence variant" evidence="2">
    <original>L</original>
    <variation>F</variation>
    <location>
        <position position="60"/>
    </location>
</feature>
<feature type="sequence variant" evidence="2">
    <original>I</original>
    <variation>T</variation>
    <location>
        <position position="93"/>
    </location>
</feature>
<feature type="sequence variant" evidence="2">
    <original>Q</original>
    <variation>R</variation>
    <location>
        <position position="114"/>
    </location>
</feature>
<protein>
    <recommendedName>
        <fullName evidence="4">Profilin</fullName>
    </recommendedName>
    <allergenName evidence="4">Cit s 2</allergenName>
</protein>
<organism>
    <name type="scientific">Citrus sinensis</name>
    <name type="common">Sweet orange</name>
    <name type="synonym">Citrus aurantium var. sinensis</name>
    <dbReference type="NCBI Taxonomy" id="2711"/>
    <lineage>
        <taxon>Eukaryota</taxon>
        <taxon>Viridiplantae</taxon>
        <taxon>Streptophyta</taxon>
        <taxon>Embryophyta</taxon>
        <taxon>Tracheophyta</taxon>
        <taxon>Spermatophyta</taxon>
        <taxon>Magnoliopsida</taxon>
        <taxon>eudicotyledons</taxon>
        <taxon>Gunneridae</taxon>
        <taxon>Pentapetalae</taxon>
        <taxon>rosids</taxon>
        <taxon>malvids</taxon>
        <taxon>Sapindales</taxon>
        <taxon>Rutaceae</taxon>
        <taxon>Aurantioideae</taxon>
        <taxon>Citrus</taxon>
    </lineage>
</organism>
<keyword id="KW-0009">Actin-binding</keyword>
<keyword id="KW-0020">Allergen</keyword>
<keyword id="KW-0963">Cytoplasm</keyword>
<keyword id="KW-0206">Cytoskeleton</keyword>
<keyword id="KW-0903">Direct protein sequencing</keyword>
<accession>P84177</accession>
<accession>Q5TIM0</accession>
<evidence type="ECO:0000250" key="1">
    <source>
        <dbReference type="UniProtKB" id="P49233"/>
    </source>
</evidence>
<evidence type="ECO:0000269" key="2">
    <source>
    </source>
</evidence>
<evidence type="ECO:0000269" key="3">
    <source>
    </source>
</evidence>
<evidence type="ECO:0000303" key="4">
    <source>
    </source>
</evidence>
<evidence type="ECO:0000305" key="5"/>
<reference evidence="5" key="1">
    <citation type="journal article" date="2005" name="Allergy">
        <title>Isolation, cloning and allergenic reactivity of natural profilin Cit s 2, a major orange allergen.</title>
        <authorList>
            <person name="Lopez-Torrejon G."/>
            <person name="Ibanez M.D."/>
            <person name="Ahrazem O."/>
            <person name="Sanchez-Monge R."/>
            <person name="Sastre J."/>
            <person name="Lombardero M."/>
            <person name="Barber D."/>
            <person name="Salcedo G."/>
        </authorList>
    </citation>
    <scope>NUCLEOTIDE SEQUENCE [MRNA]</scope>
    <scope>PROTEIN SEQUENCE OF 2-11</scope>
    <scope>MASS SPECTROMETRY</scope>
    <scope>ALLERGEN</scope>
    <scope>VARIANTS PHE-60; THR-93 AND ARG-114</scope>
    <source>
        <strain evidence="2">cv. Navel late</strain>
        <tissue evidence="2">Fruit flesh</tissue>
        <tissue evidence="2">Peelings</tissue>
    </source>
</reference>
<reference key="2">
    <citation type="journal article" date="2006" name="Mol. Nutr. Food Res.">
        <title>Germin-like protein Cit s 1 and profilin Cit s 2 are major allergens in orange (Citrus sinensis) fruits.</title>
        <authorList>
            <person name="Crespo J.F."/>
            <person name="Retzek M."/>
            <person name="Foetisch K."/>
            <person name="Sierra-Maestro E."/>
            <person name="Cid-Sanchez A.B."/>
            <person name="Pascual C.Y."/>
            <person name="Conti A."/>
            <person name="Feliu A."/>
            <person name="Rodriguez J."/>
            <person name="Vieths S."/>
            <person name="Scheurer S."/>
        </authorList>
    </citation>
    <scope>ALLERGEN</scope>
</reference>
<comment type="function">
    <text evidence="1">Binds to actin and affects the structure of the cytoskeleton. At high concentrations, profilin prevents the polymerization of actin, whereas it enhances it at low concentrations. By binding to PIP2, it inhibits the formation of IP3 and DG (By similarity).</text>
</comment>
<comment type="subunit">
    <text evidence="1">Occurs in many kinds of cells as a complex with monomeric actin in a 1:1 ratio.</text>
</comment>
<comment type="subcellular location">
    <subcellularLocation>
        <location evidence="1">Cytoplasm</location>
        <location evidence="1">Cytoskeleton</location>
    </subcellularLocation>
</comment>
<comment type="mass spectrometry"/>
<comment type="allergen">
    <text evidence="2 3">Causes an allergic reaction in human. Binds to IgE. Induces histamine release from basophils of profilin-allergic patients.</text>
</comment>
<comment type="similarity">
    <text evidence="5">Belongs to the profilin family.</text>
</comment>